<organism>
    <name type="scientific">Methanoculleus marisnigri (strain ATCC 35101 / DSM 1498 / JR1)</name>
    <dbReference type="NCBI Taxonomy" id="368407"/>
    <lineage>
        <taxon>Archaea</taxon>
        <taxon>Methanobacteriati</taxon>
        <taxon>Methanobacteriota</taxon>
        <taxon>Stenosarchaea group</taxon>
        <taxon>Methanomicrobia</taxon>
        <taxon>Methanomicrobiales</taxon>
        <taxon>Methanomicrobiaceae</taxon>
        <taxon>Methanoculleus</taxon>
    </lineage>
</organism>
<feature type="chain" id="PRO_1000054981" description="Small ribosomal subunit protein uS17">
    <location>
        <begin position="1"/>
        <end position="108"/>
    </location>
</feature>
<proteinExistence type="inferred from homology"/>
<protein>
    <recommendedName>
        <fullName evidence="1">Small ribosomal subunit protein uS17</fullName>
    </recommendedName>
    <alternativeName>
        <fullName evidence="2">30S ribosomal protein S17</fullName>
    </alternativeName>
</protein>
<dbReference type="EMBL" id="CP000562">
    <property type="protein sequence ID" value="ABN56506.1"/>
    <property type="molecule type" value="Genomic_DNA"/>
</dbReference>
<dbReference type="RefSeq" id="WP_011843416.1">
    <property type="nucleotide sequence ID" value="NC_009051.1"/>
</dbReference>
<dbReference type="SMR" id="A3CT06"/>
<dbReference type="STRING" id="368407.Memar_0573"/>
<dbReference type="GeneID" id="4847729"/>
<dbReference type="KEGG" id="mem:Memar_0573"/>
<dbReference type="eggNOG" id="arCOG04096">
    <property type="taxonomic scope" value="Archaea"/>
</dbReference>
<dbReference type="HOGENOM" id="CLU_073626_0_3_2"/>
<dbReference type="OrthoDB" id="10698at2157"/>
<dbReference type="Proteomes" id="UP000002146">
    <property type="component" value="Chromosome"/>
</dbReference>
<dbReference type="GO" id="GO:0022627">
    <property type="term" value="C:cytosolic small ribosomal subunit"/>
    <property type="evidence" value="ECO:0007669"/>
    <property type="project" value="TreeGrafter"/>
</dbReference>
<dbReference type="GO" id="GO:0019843">
    <property type="term" value="F:rRNA binding"/>
    <property type="evidence" value="ECO:0007669"/>
    <property type="project" value="UniProtKB-UniRule"/>
</dbReference>
<dbReference type="GO" id="GO:0003735">
    <property type="term" value="F:structural constituent of ribosome"/>
    <property type="evidence" value="ECO:0007669"/>
    <property type="project" value="InterPro"/>
</dbReference>
<dbReference type="GO" id="GO:0006412">
    <property type="term" value="P:translation"/>
    <property type="evidence" value="ECO:0007669"/>
    <property type="project" value="UniProtKB-UniRule"/>
</dbReference>
<dbReference type="CDD" id="cd00364">
    <property type="entry name" value="Ribosomal_uS17"/>
    <property type="match status" value="1"/>
</dbReference>
<dbReference type="FunFam" id="2.40.50.1000:FF:000005">
    <property type="entry name" value="30S ribosomal protein S17"/>
    <property type="match status" value="1"/>
</dbReference>
<dbReference type="Gene3D" id="2.40.50.1000">
    <property type="match status" value="1"/>
</dbReference>
<dbReference type="HAMAP" id="MF_01345_A">
    <property type="entry name" value="Ribosomal_uS17_A"/>
    <property type="match status" value="1"/>
</dbReference>
<dbReference type="InterPro" id="IPR012340">
    <property type="entry name" value="NA-bd_OB-fold"/>
</dbReference>
<dbReference type="InterPro" id="IPR000266">
    <property type="entry name" value="Ribosomal_uS17"/>
</dbReference>
<dbReference type="InterPro" id="IPR028333">
    <property type="entry name" value="Ribosomal_uS17_arc/euk"/>
</dbReference>
<dbReference type="InterPro" id="IPR019978">
    <property type="entry name" value="Ribosomal_uS17_archaeal"/>
</dbReference>
<dbReference type="InterPro" id="IPR019979">
    <property type="entry name" value="Ribosomal_uS17_CS"/>
</dbReference>
<dbReference type="NCBIfam" id="NF006345">
    <property type="entry name" value="PRK08572.1"/>
    <property type="match status" value="1"/>
</dbReference>
<dbReference type="NCBIfam" id="TIGR03630">
    <property type="entry name" value="uS17_arch"/>
    <property type="match status" value="1"/>
</dbReference>
<dbReference type="PANTHER" id="PTHR10744">
    <property type="entry name" value="40S RIBOSOMAL PROTEIN S11 FAMILY MEMBER"/>
    <property type="match status" value="1"/>
</dbReference>
<dbReference type="PANTHER" id="PTHR10744:SF9">
    <property type="entry name" value="40S RIBOSOMAL PROTEIN S11-RELATED"/>
    <property type="match status" value="1"/>
</dbReference>
<dbReference type="Pfam" id="PF00366">
    <property type="entry name" value="Ribosomal_S17"/>
    <property type="match status" value="1"/>
</dbReference>
<dbReference type="PRINTS" id="PR00973">
    <property type="entry name" value="RIBOSOMALS17"/>
</dbReference>
<dbReference type="SUPFAM" id="SSF50249">
    <property type="entry name" value="Nucleic acid-binding proteins"/>
    <property type="match status" value="1"/>
</dbReference>
<dbReference type="PROSITE" id="PS00056">
    <property type="entry name" value="RIBOSOMAL_S17"/>
    <property type="match status" value="1"/>
</dbReference>
<comment type="function">
    <text evidence="1">One of the primary rRNA binding proteins, it binds specifically to the 5'-end of 16S ribosomal RNA.</text>
</comment>
<comment type="subunit">
    <text evidence="1">Part of the 30S ribosomal subunit.</text>
</comment>
<comment type="similarity">
    <text evidence="1">Belongs to the universal ribosomal protein uS17 family.</text>
</comment>
<accession>A3CT06</accession>
<reference key="1">
    <citation type="journal article" date="2009" name="Stand. Genomic Sci.">
        <title>Complete genome sequence of Methanoculleus marisnigri Romesser et al. 1981 type strain JR1.</title>
        <authorList>
            <person name="Anderson I.J."/>
            <person name="Sieprawska-Lupa M."/>
            <person name="Lapidus A."/>
            <person name="Nolan M."/>
            <person name="Copeland A."/>
            <person name="Glavina Del Rio T."/>
            <person name="Tice H."/>
            <person name="Dalin E."/>
            <person name="Barry K."/>
            <person name="Saunders E."/>
            <person name="Han C."/>
            <person name="Brettin T."/>
            <person name="Detter J.C."/>
            <person name="Bruce D."/>
            <person name="Mikhailova N."/>
            <person name="Pitluck S."/>
            <person name="Hauser L."/>
            <person name="Land M."/>
            <person name="Lucas S."/>
            <person name="Richardson P."/>
            <person name="Whitman W.B."/>
            <person name="Kyrpides N.C."/>
        </authorList>
    </citation>
    <scope>NUCLEOTIDE SEQUENCE [LARGE SCALE GENOMIC DNA]</scope>
    <source>
        <strain>ATCC 35101 / DSM 1498 / JR1</strain>
    </source>
</reference>
<sequence>MARNIGLDVPIPETECEDVNCPFHGTLPVRGQVITGKVVSDRMNGTVVVEREFLHYVKKYKRYEKRRSRYHAHSTPCINAGVGDVVRIAECRPLSKTTNFVVVEVMTE</sequence>
<evidence type="ECO:0000255" key="1">
    <source>
        <dbReference type="HAMAP-Rule" id="MF_01345"/>
    </source>
</evidence>
<evidence type="ECO:0000305" key="2"/>
<gene>
    <name evidence="1" type="primary">rps17</name>
    <name type="ordered locus">Memar_0573</name>
</gene>
<name>RS17_METMJ</name>
<keyword id="KW-0687">Ribonucleoprotein</keyword>
<keyword id="KW-0689">Ribosomal protein</keyword>
<keyword id="KW-0694">RNA-binding</keyword>
<keyword id="KW-0699">rRNA-binding</keyword>